<evidence type="ECO:0000255" key="1">
    <source>
        <dbReference type="HAMAP-Rule" id="MF_00093"/>
    </source>
</evidence>
<name>RF1_STRP7</name>
<organism>
    <name type="scientific">Streptococcus pneumoniae (strain 70585)</name>
    <dbReference type="NCBI Taxonomy" id="488221"/>
    <lineage>
        <taxon>Bacteria</taxon>
        <taxon>Bacillati</taxon>
        <taxon>Bacillota</taxon>
        <taxon>Bacilli</taxon>
        <taxon>Lactobacillales</taxon>
        <taxon>Streptococcaceae</taxon>
        <taxon>Streptococcus</taxon>
    </lineage>
</organism>
<proteinExistence type="inferred from homology"/>
<gene>
    <name evidence="1" type="primary">prfA</name>
    <name type="ordered locus">SP70585_1059</name>
</gene>
<keyword id="KW-0963">Cytoplasm</keyword>
<keyword id="KW-0488">Methylation</keyword>
<keyword id="KW-0648">Protein biosynthesis</keyword>
<accession>C1C6Z5</accession>
<feature type="chain" id="PRO_1000193506" description="Peptide chain release factor 1">
    <location>
        <begin position="1"/>
        <end position="359"/>
    </location>
</feature>
<feature type="modified residue" description="N5-methylglutamine" evidence="1">
    <location>
        <position position="236"/>
    </location>
</feature>
<reference key="1">
    <citation type="journal article" date="2010" name="Genome Biol.">
        <title>Structure and dynamics of the pan-genome of Streptococcus pneumoniae and closely related species.</title>
        <authorList>
            <person name="Donati C."/>
            <person name="Hiller N.L."/>
            <person name="Tettelin H."/>
            <person name="Muzzi A."/>
            <person name="Croucher N.J."/>
            <person name="Angiuoli S.V."/>
            <person name="Oggioni M."/>
            <person name="Dunning Hotopp J.C."/>
            <person name="Hu F.Z."/>
            <person name="Riley D.R."/>
            <person name="Covacci A."/>
            <person name="Mitchell T.J."/>
            <person name="Bentley S.D."/>
            <person name="Kilian M."/>
            <person name="Ehrlich G.D."/>
            <person name="Rappuoli R."/>
            <person name="Moxon E.R."/>
            <person name="Masignani V."/>
        </authorList>
    </citation>
    <scope>NUCLEOTIDE SEQUENCE [LARGE SCALE GENOMIC DNA]</scope>
    <source>
        <strain>70585</strain>
    </source>
</reference>
<comment type="function">
    <text evidence="1">Peptide chain release factor 1 directs the termination of translation in response to the peptide chain termination codons UAG and UAA.</text>
</comment>
<comment type="subcellular location">
    <subcellularLocation>
        <location evidence="1">Cytoplasm</location>
    </subcellularLocation>
</comment>
<comment type="PTM">
    <text evidence="1">Methylated by PrmC. Methylation increases the termination efficiency of RF1.</text>
</comment>
<comment type="similarity">
    <text evidence="1">Belongs to the prokaryotic/mitochondrial release factor family.</text>
</comment>
<protein>
    <recommendedName>
        <fullName evidence="1">Peptide chain release factor 1</fullName>
        <shortName evidence="1">RF-1</shortName>
    </recommendedName>
</protein>
<sequence>MNIYDQLQAVEDRYEELGELLSDPDVVSDTKRFMELSKEEASNRDTVIAYREYKQVLQNIVDAEEMIKESGGDADLEEMAKQELKDAKAEKEEYEEKLKILLLPKDPNDDKNIILEIRGAAGGDEAALFAGDLLTMYQKYAEAQGWRFEVMEASMNGVGGFKEVVAMVSGQSVYSKLKYESGAHRVQRVPVTESQGRVHTSTATVLVMPEVEEVEYDIDPKDLRVDIYHASGAGGQNVNKVATAVRIVHLPTNIKVEMQEERTQQKNREKAMKIIRARVADHFAQIAQDEQDAERKSTIGTGDRSERIRTYNFPQNRVTDHRIGLTLQKLDTILSGKLDEVVDALVLYDQTQKLEELNK</sequence>
<dbReference type="EMBL" id="CP000918">
    <property type="protein sequence ID" value="ACO16778.1"/>
    <property type="molecule type" value="Genomic_DNA"/>
</dbReference>
<dbReference type="RefSeq" id="WP_001028801.1">
    <property type="nucleotide sequence ID" value="NC_012468.1"/>
</dbReference>
<dbReference type="SMR" id="C1C6Z5"/>
<dbReference type="GeneID" id="45653642"/>
<dbReference type="KEGG" id="snm:SP70585_1059"/>
<dbReference type="HOGENOM" id="CLU_036856_0_1_9"/>
<dbReference type="Proteomes" id="UP000002211">
    <property type="component" value="Chromosome"/>
</dbReference>
<dbReference type="GO" id="GO:0005737">
    <property type="term" value="C:cytoplasm"/>
    <property type="evidence" value="ECO:0007669"/>
    <property type="project" value="UniProtKB-SubCell"/>
</dbReference>
<dbReference type="GO" id="GO:0016149">
    <property type="term" value="F:translation release factor activity, codon specific"/>
    <property type="evidence" value="ECO:0007669"/>
    <property type="project" value="UniProtKB-UniRule"/>
</dbReference>
<dbReference type="FunFam" id="3.30.160.20:FF:000027">
    <property type="entry name" value="Peptide chain release factor 1"/>
    <property type="match status" value="1"/>
</dbReference>
<dbReference type="FunFam" id="3.30.70.1660:FF:000002">
    <property type="entry name" value="Peptide chain release factor 1"/>
    <property type="match status" value="1"/>
</dbReference>
<dbReference type="FunFam" id="3.30.70.1660:FF:000004">
    <property type="entry name" value="Peptide chain release factor 1"/>
    <property type="match status" value="1"/>
</dbReference>
<dbReference type="Gene3D" id="3.30.160.20">
    <property type="match status" value="1"/>
</dbReference>
<dbReference type="Gene3D" id="3.30.70.1660">
    <property type="match status" value="2"/>
</dbReference>
<dbReference type="Gene3D" id="6.10.140.1950">
    <property type="match status" value="1"/>
</dbReference>
<dbReference type="HAMAP" id="MF_00093">
    <property type="entry name" value="Rel_fac_1"/>
    <property type="match status" value="1"/>
</dbReference>
<dbReference type="InterPro" id="IPR005139">
    <property type="entry name" value="PCRF"/>
</dbReference>
<dbReference type="InterPro" id="IPR000352">
    <property type="entry name" value="Pep_chain_release_fac_I"/>
</dbReference>
<dbReference type="InterPro" id="IPR045853">
    <property type="entry name" value="Pep_chain_release_fac_I_sf"/>
</dbReference>
<dbReference type="InterPro" id="IPR050057">
    <property type="entry name" value="Prokaryotic/Mito_RF"/>
</dbReference>
<dbReference type="InterPro" id="IPR004373">
    <property type="entry name" value="RF-1"/>
</dbReference>
<dbReference type="NCBIfam" id="TIGR00019">
    <property type="entry name" value="prfA"/>
    <property type="match status" value="1"/>
</dbReference>
<dbReference type="NCBIfam" id="NF001859">
    <property type="entry name" value="PRK00591.1"/>
    <property type="match status" value="1"/>
</dbReference>
<dbReference type="PANTHER" id="PTHR43804">
    <property type="entry name" value="LD18447P"/>
    <property type="match status" value="1"/>
</dbReference>
<dbReference type="PANTHER" id="PTHR43804:SF7">
    <property type="entry name" value="LD18447P"/>
    <property type="match status" value="1"/>
</dbReference>
<dbReference type="Pfam" id="PF03462">
    <property type="entry name" value="PCRF"/>
    <property type="match status" value="1"/>
</dbReference>
<dbReference type="Pfam" id="PF00472">
    <property type="entry name" value="RF-1"/>
    <property type="match status" value="1"/>
</dbReference>
<dbReference type="SMART" id="SM00937">
    <property type="entry name" value="PCRF"/>
    <property type="match status" value="1"/>
</dbReference>
<dbReference type="SUPFAM" id="SSF75620">
    <property type="entry name" value="Release factor"/>
    <property type="match status" value="1"/>
</dbReference>
<dbReference type="PROSITE" id="PS00745">
    <property type="entry name" value="RF_PROK_I"/>
    <property type="match status" value="1"/>
</dbReference>